<reference key="1">
    <citation type="journal article" date="2010" name="J. Bacteriol.">
        <title>Whole genome sequences of two Xylella fastidiosa strains (M12 and M23) causing almond leaf scorch disease in California.</title>
        <authorList>
            <person name="Chen J."/>
            <person name="Xie G."/>
            <person name="Han S."/>
            <person name="Chertkov O."/>
            <person name="Sims D."/>
            <person name="Civerolo E.L."/>
        </authorList>
    </citation>
    <scope>NUCLEOTIDE SEQUENCE [LARGE SCALE GENOMIC DNA]</scope>
    <source>
        <strain>M23</strain>
    </source>
</reference>
<feature type="chain" id="PRO_1000137740" description="Chaperone protein DnaJ">
    <location>
        <begin position="1"/>
        <end position="368"/>
    </location>
</feature>
<feature type="domain" description="J" evidence="1">
    <location>
        <begin position="5"/>
        <end position="70"/>
    </location>
</feature>
<feature type="repeat" description="CXXCXGXG motif">
    <location>
        <begin position="137"/>
        <end position="144"/>
    </location>
</feature>
<feature type="repeat" description="CXXCXGXG motif">
    <location>
        <begin position="153"/>
        <end position="160"/>
    </location>
</feature>
<feature type="repeat" description="CXXCXGXG motif">
    <location>
        <begin position="175"/>
        <end position="182"/>
    </location>
</feature>
<feature type="repeat" description="CXXCXGXG motif">
    <location>
        <begin position="189"/>
        <end position="196"/>
    </location>
</feature>
<feature type="zinc finger region" description="CR-type" evidence="1">
    <location>
        <begin position="124"/>
        <end position="201"/>
    </location>
</feature>
<feature type="binding site" evidence="1">
    <location>
        <position position="137"/>
    </location>
    <ligand>
        <name>Zn(2+)</name>
        <dbReference type="ChEBI" id="CHEBI:29105"/>
        <label>1</label>
    </ligand>
</feature>
<feature type="binding site" evidence="1">
    <location>
        <position position="140"/>
    </location>
    <ligand>
        <name>Zn(2+)</name>
        <dbReference type="ChEBI" id="CHEBI:29105"/>
        <label>1</label>
    </ligand>
</feature>
<feature type="binding site" evidence="1">
    <location>
        <position position="153"/>
    </location>
    <ligand>
        <name>Zn(2+)</name>
        <dbReference type="ChEBI" id="CHEBI:29105"/>
        <label>2</label>
    </ligand>
</feature>
<feature type="binding site" evidence="1">
    <location>
        <position position="156"/>
    </location>
    <ligand>
        <name>Zn(2+)</name>
        <dbReference type="ChEBI" id="CHEBI:29105"/>
        <label>2</label>
    </ligand>
</feature>
<feature type="binding site" evidence="1">
    <location>
        <position position="175"/>
    </location>
    <ligand>
        <name>Zn(2+)</name>
        <dbReference type="ChEBI" id="CHEBI:29105"/>
        <label>2</label>
    </ligand>
</feature>
<feature type="binding site" evidence="1">
    <location>
        <position position="178"/>
    </location>
    <ligand>
        <name>Zn(2+)</name>
        <dbReference type="ChEBI" id="CHEBI:29105"/>
        <label>2</label>
    </ligand>
</feature>
<feature type="binding site" evidence="1">
    <location>
        <position position="189"/>
    </location>
    <ligand>
        <name>Zn(2+)</name>
        <dbReference type="ChEBI" id="CHEBI:29105"/>
        <label>1</label>
    </ligand>
</feature>
<feature type="binding site" evidence="1">
    <location>
        <position position="192"/>
    </location>
    <ligand>
        <name>Zn(2+)</name>
        <dbReference type="ChEBI" id="CHEBI:29105"/>
        <label>1</label>
    </ligand>
</feature>
<dbReference type="EMBL" id="CP001011">
    <property type="protein sequence ID" value="ACB92865.1"/>
    <property type="molecule type" value="Genomic_DNA"/>
</dbReference>
<dbReference type="RefSeq" id="WP_004091053.1">
    <property type="nucleotide sequence ID" value="NC_010577.1"/>
</dbReference>
<dbReference type="SMR" id="B2I6F5"/>
<dbReference type="GeneID" id="93905186"/>
<dbReference type="KEGG" id="xfn:XfasM23_1454"/>
<dbReference type="HOGENOM" id="CLU_017633_0_7_6"/>
<dbReference type="Proteomes" id="UP000001698">
    <property type="component" value="Chromosome"/>
</dbReference>
<dbReference type="GO" id="GO:0005737">
    <property type="term" value="C:cytoplasm"/>
    <property type="evidence" value="ECO:0007669"/>
    <property type="project" value="UniProtKB-SubCell"/>
</dbReference>
<dbReference type="GO" id="GO:0005524">
    <property type="term" value="F:ATP binding"/>
    <property type="evidence" value="ECO:0007669"/>
    <property type="project" value="InterPro"/>
</dbReference>
<dbReference type="GO" id="GO:0031072">
    <property type="term" value="F:heat shock protein binding"/>
    <property type="evidence" value="ECO:0007669"/>
    <property type="project" value="InterPro"/>
</dbReference>
<dbReference type="GO" id="GO:0051082">
    <property type="term" value="F:unfolded protein binding"/>
    <property type="evidence" value="ECO:0007669"/>
    <property type="project" value="UniProtKB-UniRule"/>
</dbReference>
<dbReference type="GO" id="GO:0008270">
    <property type="term" value="F:zinc ion binding"/>
    <property type="evidence" value="ECO:0007669"/>
    <property type="project" value="UniProtKB-UniRule"/>
</dbReference>
<dbReference type="GO" id="GO:0051085">
    <property type="term" value="P:chaperone cofactor-dependent protein refolding"/>
    <property type="evidence" value="ECO:0007669"/>
    <property type="project" value="TreeGrafter"/>
</dbReference>
<dbReference type="GO" id="GO:0006260">
    <property type="term" value="P:DNA replication"/>
    <property type="evidence" value="ECO:0007669"/>
    <property type="project" value="UniProtKB-KW"/>
</dbReference>
<dbReference type="GO" id="GO:0042026">
    <property type="term" value="P:protein refolding"/>
    <property type="evidence" value="ECO:0007669"/>
    <property type="project" value="TreeGrafter"/>
</dbReference>
<dbReference type="GO" id="GO:0009408">
    <property type="term" value="P:response to heat"/>
    <property type="evidence" value="ECO:0007669"/>
    <property type="project" value="InterPro"/>
</dbReference>
<dbReference type="CDD" id="cd06257">
    <property type="entry name" value="DnaJ"/>
    <property type="match status" value="1"/>
</dbReference>
<dbReference type="CDD" id="cd10747">
    <property type="entry name" value="DnaJ_C"/>
    <property type="match status" value="1"/>
</dbReference>
<dbReference type="CDD" id="cd10719">
    <property type="entry name" value="DnaJ_zf"/>
    <property type="match status" value="1"/>
</dbReference>
<dbReference type="FunFam" id="2.10.230.10:FF:000002">
    <property type="entry name" value="Molecular chaperone DnaJ"/>
    <property type="match status" value="1"/>
</dbReference>
<dbReference type="FunFam" id="2.60.260.20:FF:000004">
    <property type="entry name" value="Molecular chaperone DnaJ"/>
    <property type="match status" value="1"/>
</dbReference>
<dbReference type="Gene3D" id="1.10.287.110">
    <property type="entry name" value="DnaJ domain"/>
    <property type="match status" value="1"/>
</dbReference>
<dbReference type="Gene3D" id="2.10.230.10">
    <property type="entry name" value="Heat shock protein DnaJ, cysteine-rich domain"/>
    <property type="match status" value="1"/>
</dbReference>
<dbReference type="Gene3D" id="2.60.260.20">
    <property type="entry name" value="Urease metallochaperone UreE, N-terminal domain"/>
    <property type="match status" value="2"/>
</dbReference>
<dbReference type="HAMAP" id="MF_01152">
    <property type="entry name" value="DnaJ"/>
    <property type="match status" value="1"/>
</dbReference>
<dbReference type="InterPro" id="IPR012724">
    <property type="entry name" value="DnaJ"/>
</dbReference>
<dbReference type="InterPro" id="IPR002939">
    <property type="entry name" value="DnaJ_C"/>
</dbReference>
<dbReference type="InterPro" id="IPR001623">
    <property type="entry name" value="DnaJ_domain"/>
</dbReference>
<dbReference type="InterPro" id="IPR008971">
    <property type="entry name" value="HSP40/DnaJ_pept-bd"/>
</dbReference>
<dbReference type="InterPro" id="IPR001305">
    <property type="entry name" value="HSP_DnaJ_Cys-rich_dom"/>
</dbReference>
<dbReference type="InterPro" id="IPR036410">
    <property type="entry name" value="HSP_DnaJ_Cys-rich_dom_sf"/>
</dbReference>
<dbReference type="InterPro" id="IPR036869">
    <property type="entry name" value="J_dom_sf"/>
</dbReference>
<dbReference type="NCBIfam" id="TIGR02349">
    <property type="entry name" value="DnaJ_bact"/>
    <property type="match status" value="1"/>
</dbReference>
<dbReference type="NCBIfam" id="NF008035">
    <property type="entry name" value="PRK10767.1"/>
    <property type="match status" value="1"/>
</dbReference>
<dbReference type="PANTHER" id="PTHR43096:SF48">
    <property type="entry name" value="CHAPERONE PROTEIN DNAJ"/>
    <property type="match status" value="1"/>
</dbReference>
<dbReference type="PANTHER" id="PTHR43096">
    <property type="entry name" value="DNAJ HOMOLOG 1, MITOCHONDRIAL-RELATED"/>
    <property type="match status" value="1"/>
</dbReference>
<dbReference type="Pfam" id="PF00226">
    <property type="entry name" value="DnaJ"/>
    <property type="match status" value="1"/>
</dbReference>
<dbReference type="Pfam" id="PF01556">
    <property type="entry name" value="DnaJ_C"/>
    <property type="match status" value="1"/>
</dbReference>
<dbReference type="Pfam" id="PF00684">
    <property type="entry name" value="DnaJ_CXXCXGXG"/>
    <property type="match status" value="1"/>
</dbReference>
<dbReference type="PRINTS" id="PR00625">
    <property type="entry name" value="JDOMAIN"/>
</dbReference>
<dbReference type="SMART" id="SM00271">
    <property type="entry name" value="DnaJ"/>
    <property type="match status" value="1"/>
</dbReference>
<dbReference type="SUPFAM" id="SSF46565">
    <property type="entry name" value="Chaperone J-domain"/>
    <property type="match status" value="1"/>
</dbReference>
<dbReference type="SUPFAM" id="SSF57938">
    <property type="entry name" value="DnaJ/Hsp40 cysteine-rich domain"/>
    <property type="match status" value="1"/>
</dbReference>
<dbReference type="SUPFAM" id="SSF49493">
    <property type="entry name" value="HSP40/DnaJ peptide-binding domain"/>
    <property type="match status" value="2"/>
</dbReference>
<dbReference type="PROSITE" id="PS50076">
    <property type="entry name" value="DNAJ_2"/>
    <property type="match status" value="1"/>
</dbReference>
<dbReference type="PROSITE" id="PS51188">
    <property type="entry name" value="ZF_CR"/>
    <property type="match status" value="1"/>
</dbReference>
<protein>
    <recommendedName>
        <fullName evidence="1">Chaperone protein DnaJ</fullName>
    </recommendedName>
</protein>
<sequence>MSKRDYYQVLGVPRTASEDDLKKAYRRCAMKYHPDRNPGDAAAEAAFKECKEAYEVLADTKKRKLYDTHGHAAFEHGVGSGNTPDMNDIFGDIFGNIFGGARASRRGADVGYMVELDLEEAVAGVERQIQIPTLVECTHCHGSGSEDGHVETCGTCRGSGQVRIQRGIFAMQQTCPHCGGRGVIIRNPCKVCNGAGRVEDHKTLSVKIPAGVDNGDRIRLSGEGEQGPDGVPPGDLYVEVRVREHPIFQRDGDDLHCEVPVRISQAALGDIVRVATLDGEAEIRIPAETQSGKLFRLRGKGVRSVRSRTEGDLYCRIVVETPVNLTAEQRKLLEQFEMTFAGEDARKHSPKSATFLDGVKSFWDRMTS</sequence>
<accession>B2I6F5</accession>
<gene>
    <name evidence="1" type="primary">dnaJ</name>
    <name type="ordered locus">XfasM23_1454</name>
</gene>
<keyword id="KW-0143">Chaperone</keyword>
<keyword id="KW-0963">Cytoplasm</keyword>
<keyword id="KW-0235">DNA replication</keyword>
<keyword id="KW-0479">Metal-binding</keyword>
<keyword id="KW-0677">Repeat</keyword>
<keyword id="KW-0346">Stress response</keyword>
<keyword id="KW-0862">Zinc</keyword>
<keyword id="KW-0863">Zinc-finger</keyword>
<proteinExistence type="inferred from homology"/>
<organism>
    <name type="scientific">Xylella fastidiosa (strain M23)</name>
    <dbReference type="NCBI Taxonomy" id="405441"/>
    <lineage>
        <taxon>Bacteria</taxon>
        <taxon>Pseudomonadati</taxon>
        <taxon>Pseudomonadota</taxon>
        <taxon>Gammaproteobacteria</taxon>
        <taxon>Lysobacterales</taxon>
        <taxon>Lysobacteraceae</taxon>
        <taxon>Xylella</taxon>
    </lineage>
</organism>
<evidence type="ECO:0000255" key="1">
    <source>
        <dbReference type="HAMAP-Rule" id="MF_01152"/>
    </source>
</evidence>
<name>DNAJ_XYLF2</name>
<comment type="function">
    <text evidence="1">Participates actively in the response to hyperosmotic and heat shock by preventing the aggregation of stress-denatured proteins and by disaggregating proteins, also in an autonomous, DnaK-independent fashion. Unfolded proteins bind initially to DnaJ; upon interaction with the DnaJ-bound protein, DnaK hydrolyzes its bound ATP, resulting in the formation of a stable complex. GrpE releases ADP from DnaK; ATP binding to DnaK triggers the release of the substrate protein, thus completing the reaction cycle. Several rounds of ATP-dependent interactions between DnaJ, DnaK and GrpE are required for fully efficient folding. Also involved, together with DnaK and GrpE, in the DNA replication of plasmids through activation of initiation proteins.</text>
</comment>
<comment type="cofactor">
    <cofactor evidence="1">
        <name>Zn(2+)</name>
        <dbReference type="ChEBI" id="CHEBI:29105"/>
    </cofactor>
    <text evidence="1">Binds 2 Zn(2+) ions per monomer.</text>
</comment>
<comment type="subunit">
    <text evidence="1">Homodimer.</text>
</comment>
<comment type="subcellular location">
    <subcellularLocation>
        <location evidence="1">Cytoplasm</location>
    </subcellularLocation>
</comment>
<comment type="domain">
    <text evidence="1">The J domain is necessary and sufficient to stimulate DnaK ATPase activity. Zinc center 1 plays an important role in the autonomous, DnaK-independent chaperone activity of DnaJ. Zinc center 2 is essential for interaction with DnaK and for DnaJ activity.</text>
</comment>
<comment type="similarity">
    <text evidence="1">Belongs to the DnaJ family.</text>
</comment>